<dbReference type="EMBL" id="AACD01000062">
    <property type="protein sequence ID" value="EAA59096.1"/>
    <property type="molecule type" value="Genomic_DNA"/>
</dbReference>
<dbReference type="EMBL" id="BN001302">
    <property type="protein sequence ID" value="CBF75285.1"/>
    <property type="molecule type" value="Genomic_DNA"/>
</dbReference>
<dbReference type="RefSeq" id="XP_661435.1">
    <property type="nucleotide sequence ID" value="XM_656343.1"/>
</dbReference>
<dbReference type="FunCoup" id="Q5B6J9">
    <property type="interactions" value="75"/>
</dbReference>
<dbReference type="STRING" id="227321.Q5B6J9"/>
<dbReference type="EnsemblFungi" id="CBF75285">
    <property type="protein sequence ID" value="CBF75285"/>
    <property type="gene ID" value="ANIA_03831"/>
</dbReference>
<dbReference type="KEGG" id="ani:ANIA_03831"/>
<dbReference type="eggNOG" id="KOG4431">
    <property type="taxonomic scope" value="Eukaryota"/>
</dbReference>
<dbReference type="HOGENOM" id="CLU_087356_0_2_1"/>
<dbReference type="InParanoid" id="Q5B6J9"/>
<dbReference type="OMA" id="YYRTERT"/>
<dbReference type="OrthoDB" id="6604018at2759"/>
<dbReference type="Proteomes" id="UP000000560">
    <property type="component" value="Chromosome II"/>
</dbReference>
<dbReference type="GO" id="GO:0031966">
    <property type="term" value="C:mitochondrial membrane"/>
    <property type="evidence" value="ECO:0007669"/>
    <property type="project" value="UniProtKB-SubCell"/>
</dbReference>
<dbReference type="GO" id="GO:0005739">
    <property type="term" value="C:mitochondrion"/>
    <property type="evidence" value="ECO:0000318"/>
    <property type="project" value="GO_Central"/>
</dbReference>
<dbReference type="GO" id="GO:0097250">
    <property type="term" value="P:mitochondrial respirasome assembly"/>
    <property type="evidence" value="ECO:0000318"/>
    <property type="project" value="GO_Central"/>
</dbReference>
<dbReference type="Gene3D" id="6.10.140.1320">
    <property type="match status" value="1"/>
</dbReference>
<dbReference type="InterPro" id="IPR007667">
    <property type="entry name" value="Hypoxia_induced_domain"/>
</dbReference>
<dbReference type="InterPro" id="IPR050355">
    <property type="entry name" value="RCF1"/>
</dbReference>
<dbReference type="PANTHER" id="PTHR12297:SF3">
    <property type="entry name" value="HIG1 DOMAIN FAMILY MEMBER 1A"/>
    <property type="match status" value="1"/>
</dbReference>
<dbReference type="PANTHER" id="PTHR12297">
    <property type="entry name" value="HYPOXIA-INDUCBILE GENE 1 HIG1 -RELATED"/>
    <property type="match status" value="1"/>
</dbReference>
<dbReference type="Pfam" id="PF04588">
    <property type="entry name" value="HIG_1_N"/>
    <property type="match status" value="1"/>
</dbReference>
<dbReference type="PROSITE" id="PS51503">
    <property type="entry name" value="HIG1"/>
    <property type="match status" value="1"/>
</dbReference>
<keyword id="KW-0472">Membrane</keyword>
<keyword id="KW-0496">Mitochondrion</keyword>
<keyword id="KW-1185">Reference proteome</keyword>
<keyword id="KW-0812">Transmembrane</keyword>
<keyword id="KW-1133">Transmembrane helix</keyword>
<comment type="function">
    <text evidence="1">Cytochrome c oxidase subunit which plays a role in assembly of respiratory supercomplexes.</text>
</comment>
<comment type="subunit">
    <text evidence="1">Associates with the respiratory chain complex III/complex IV supercomplex.</text>
</comment>
<comment type="subcellular location">
    <subcellularLocation>
        <location evidence="2">Mitochondrion membrane</location>
        <topology evidence="2">Multi-pass membrane protein</topology>
    </subcellularLocation>
</comment>
<comment type="similarity">
    <text evidence="3">Belongs to the RCF1 family.</text>
</comment>
<accession>Q5B6J9</accession>
<accession>C8V6Q5</accession>
<gene>
    <name type="primary">rcf1</name>
    <name type="synonym">aim31</name>
    <name type="ORF">AN3831</name>
</gene>
<feature type="chain" id="PRO_0000399633" description="Respiratory supercomplex factor 1, mitochondrial">
    <location>
        <begin position="1"/>
        <end position="181"/>
    </location>
</feature>
<feature type="transmembrane region" description="Helical" evidence="2">
    <location>
        <begin position="33"/>
        <end position="50"/>
    </location>
</feature>
<feature type="transmembrane region" description="Helical" evidence="2">
    <location>
        <begin position="70"/>
        <end position="89"/>
    </location>
</feature>
<feature type="domain" description="HIG1" evidence="2">
    <location>
        <begin position="5"/>
        <end position="100"/>
    </location>
</feature>
<proteinExistence type="inferred from homology"/>
<evidence type="ECO:0000250" key="1"/>
<evidence type="ECO:0000255" key="2">
    <source>
        <dbReference type="PROSITE-ProRule" id="PRU00836"/>
    </source>
</evidence>
<evidence type="ECO:0000305" key="3"/>
<name>RCF1_EMENI</name>
<reference key="1">
    <citation type="journal article" date="2005" name="Nature">
        <title>Sequencing of Aspergillus nidulans and comparative analysis with A. fumigatus and A. oryzae.</title>
        <authorList>
            <person name="Galagan J.E."/>
            <person name="Calvo S.E."/>
            <person name="Cuomo C."/>
            <person name="Ma L.-J."/>
            <person name="Wortman J.R."/>
            <person name="Batzoglou S."/>
            <person name="Lee S.-I."/>
            <person name="Bastuerkmen M."/>
            <person name="Spevak C.C."/>
            <person name="Clutterbuck J."/>
            <person name="Kapitonov V."/>
            <person name="Jurka J."/>
            <person name="Scazzocchio C."/>
            <person name="Farman M.L."/>
            <person name="Butler J."/>
            <person name="Purcell S."/>
            <person name="Harris S."/>
            <person name="Braus G.H."/>
            <person name="Draht O."/>
            <person name="Busch S."/>
            <person name="D'Enfert C."/>
            <person name="Bouchier C."/>
            <person name="Goldman G.H."/>
            <person name="Bell-Pedersen D."/>
            <person name="Griffiths-Jones S."/>
            <person name="Doonan J.H."/>
            <person name="Yu J."/>
            <person name="Vienken K."/>
            <person name="Pain A."/>
            <person name="Freitag M."/>
            <person name="Selker E.U."/>
            <person name="Archer D.B."/>
            <person name="Penalva M.A."/>
            <person name="Oakley B.R."/>
            <person name="Momany M."/>
            <person name="Tanaka T."/>
            <person name="Kumagai T."/>
            <person name="Asai K."/>
            <person name="Machida M."/>
            <person name="Nierman W.C."/>
            <person name="Denning D.W."/>
            <person name="Caddick M.X."/>
            <person name="Hynes M."/>
            <person name="Paoletti M."/>
            <person name="Fischer R."/>
            <person name="Miller B.L."/>
            <person name="Dyer P.S."/>
            <person name="Sachs M.S."/>
            <person name="Osmani S.A."/>
            <person name="Birren B.W."/>
        </authorList>
    </citation>
    <scope>NUCLEOTIDE SEQUENCE [LARGE SCALE GENOMIC DNA]</scope>
    <source>
        <strain>FGSC A4 / ATCC 38163 / CBS 112.46 / NRRL 194 / M139</strain>
    </source>
</reference>
<reference key="2">
    <citation type="journal article" date="2009" name="Fungal Genet. Biol.">
        <title>The 2008 update of the Aspergillus nidulans genome annotation: a community effort.</title>
        <authorList>
            <person name="Wortman J.R."/>
            <person name="Gilsenan J.M."/>
            <person name="Joardar V."/>
            <person name="Deegan J."/>
            <person name="Clutterbuck J."/>
            <person name="Andersen M.R."/>
            <person name="Archer D."/>
            <person name="Bencina M."/>
            <person name="Braus G."/>
            <person name="Coutinho P."/>
            <person name="von Dohren H."/>
            <person name="Doonan J."/>
            <person name="Driessen A.J."/>
            <person name="Durek P."/>
            <person name="Espeso E."/>
            <person name="Fekete E."/>
            <person name="Flipphi M."/>
            <person name="Estrada C.G."/>
            <person name="Geysens S."/>
            <person name="Goldman G."/>
            <person name="de Groot P.W."/>
            <person name="Hansen K."/>
            <person name="Harris S.D."/>
            <person name="Heinekamp T."/>
            <person name="Helmstaedt K."/>
            <person name="Henrissat B."/>
            <person name="Hofmann G."/>
            <person name="Homan T."/>
            <person name="Horio T."/>
            <person name="Horiuchi H."/>
            <person name="James S."/>
            <person name="Jones M."/>
            <person name="Karaffa L."/>
            <person name="Karanyi Z."/>
            <person name="Kato M."/>
            <person name="Keller N."/>
            <person name="Kelly D.E."/>
            <person name="Kiel J.A."/>
            <person name="Kim J.M."/>
            <person name="van der Klei I.J."/>
            <person name="Klis F.M."/>
            <person name="Kovalchuk A."/>
            <person name="Krasevec N."/>
            <person name="Kubicek C.P."/>
            <person name="Liu B."/>
            <person name="Maccabe A."/>
            <person name="Meyer V."/>
            <person name="Mirabito P."/>
            <person name="Miskei M."/>
            <person name="Mos M."/>
            <person name="Mullins J."/>
            <person name="Nelson D.R."/>
            <person name="Nielsen J."/>
            <person name="Oakley B.R."/>
            <person name="Osmani S.A."/>
            <person name="Pakula T."/>
            <person name="Paszewski A."/>
            <person name="Paulsen I."/>
            <person name="Pilsyk S."/>
            <person name="Pocsi I."/>
            <person name="Punt P.J."/>
            <person name="Ram A.F."/>
            <person name="Ren Q."/>
            <person name="Robellet X."/>
            <person name="Robson G."/>
            <person name="Seiboth B."/>
            <person name="van Solingen P."/>
            <person name="Specht T."/>
            <person name="Sun J."/>
            <person name="Taheri-Talesh N."/>
            <person name="Takeshita N."/>
            <person name="Ussery D."/>
            <person name="vanKuyk P.A."/>
            <person name="Visser H."/>
            <person name="van de Vondervoort P.J."/>
            <person name="de Vries R.P."/>
            <person name="Walton J."/>
            <person name="Xiang X."/>
            <person name="Xiong Y."/>
            <person name="Zeng A.P."/>
            <person name="Brandt B.W."/>
            <person name="Cornell M.J."/>
            <person name="van den Hondel C.A."/>
            <person name="Visser J."/>
            <person name="Oliver S.G."/>
            <person name="Turner G."/>
        </authorList>
    </citation>
    <scope>GENOME REANNOTATION</scope>
    <source>
        <strain>FGSC A4 / ATCC 38163 / CBS 112.46 / NRRL 194 / M139</strain>
    </source>
</reference>
<organism>
    <name type="scientific">Emericella nidulans (strain FGSC A4 / ATCC 38163 / CBS 112.46 / NRRL 194 / M139)</name>
    <name type="common">Aspergillus nidulans</name>
    <dbReference type="NCBI Taxonomy" id="227321"/>
    <lineage>
        <taxon>Eukaryota</taxon>
        <taxon>Fungi</taxon>
        <taxon>Dikarya</taxon>
        <taxon>Ascomycota</taxon>
        <taxon>Pezizomycotina</taxon>
        <taxon>Eurotiomycetes</taxon>
        <taxon>Eurotiomycetidae</taxon>
        <taxon>Eurotiales</taxon>
        <taxon>Aspergillaceae</taxon>
        <taxon>Aspergillus</taxon>
        <taxon>Aspergillus subgen. Nidulantes</taxon>
    </lineage>
</organism>
<sequence length="181" mass="20956">MSEPLPSSFDGHEQFQEETPLQKFGRRFKEEPWVPAVGLLGCAATCYALWRAYRSMKAGDSVEMNRMFRARIYAQGLTLLTVVAGGLYYRTERTQRREFEQALELRKGQEKRDAWLRELEIRDKEDKEWRERHAAIEAAAKQAGNKPVLAEQDAARSALEPSEQKYYGVLDAVRDLVSRRE</sequence>
<protein>
    <recommendedName>
        <fullName>Respiratory supercomplex factor 1, mitochondrial</fullName>
    </recommendedName>
</protein>